<feature type="transit peptide" description="Chloroplast" evidence="4">
    <location>
        <begin position="1"/>
        <end position="76"/>
    </location>
</feature>
<feature type="chain" id="PRO_0000002287" description="3-phosphoshikimate 1-carboxyvinyltransferase, chloroplastic">
    <location>
        <begin position="77"/>
        <end position="520"/>
    </location>
</feature>
<feature type="region of interest" description="Disordered" evidence="5">
    <location>
        <begin position="20"/>
        <end position="39"/>
    </location>
</feature>
<feature type="active site" description="Proton acceptor" evidence="1">
    <location>
        <position position="407"/>
    </location>
</feature>
<feature type="binding site" evidence="1">
    <location>
        <position position="99"/>
    </location>
    <ligand>
        <name>3-phosphoshikimate</name>
        <dbReference type="ChEBI" id="CHEBI:145989"/>
    </ligand>
</feature>
<feature type="binding site" evidence="3">
    <location>
        <position position="99"/>
    </location>
    <ligand>
        <name>phosphoenolpyruvate</name>
        <dbReference type="ChEBI" id="CHEBI:58702"/>
    </ligand>
</feature>
<feature type="binding site" evidence="1">
    <location>
        <position position="100"/>
    </location>
    <ligand>
        <name>3-phosphoshikimate</name>
        <dbReference type="ChEBI" id="CHEBI:145989"/>
    </ligand>
</feature>
<feature type="binding site" evidence="1">
    <location>
        <position position="104"/>
    </location>
    <ligand>
        <name>3-phosphoshikimate</name>
        <dbReference type="ChEBI" id="CHEBI:145989"/>
    </ligand>
</feature>
<feature type="binding site" evidence="3">
    <location>
        <position position="177"/>
    </location>
    <ligand>
        <name>phosphoenolpyruvate</name>
        <dbReference type="ChEBI" id="CHEBI:58702"/>
    </ligand>
</feature>
<feature type="binding site" evidence="3">
    <location>
        <position position="207"/>
    </location>
    <ligand>
        <name>phosphoenolpyruvate</name>
        <dbReference type="ChEBI" id="CHEBI:58702"/>
    </ligand>
</feature>
<feature type="binding site" evidence="1">
    <location>
        <position position="254"/>
    </location>
    <ligand>
        <name>3-phosphoshikimate</name>
        <dbReference type="ChEBI" id="CHEBI:145989"/>
    </ligand>
</feature>
<feature type="binding site" evidence="1">
    <location>
        <position position="255"/>
    </location>
    <ligand>
        <name>3-phosphoshikimate</name>
        <dbReference type="ChEBI" id="CHEBI:145989"/>
    </ligand>
</feature>
<feature type="binding site" evidence="1">
    <location>
        <position position="256"/>
    </location>
    <ligand>
        <name>3-phosphoshikimate</name>
        <dbReference type="ChEBI" id="CHEBI:145989"/>
    </ligand>
</feature>
<feature type="binding site" evidence="3">
    <location>
        <position position="256"/>
    </location>
    <ligand>
        <name>phosphoenolpyruvate</name>
        <dbReference type="ChEBI" id="CHEBI:58702"/>
    </ligand>
</feature>
<feature type="binding site" evidence="1">
    <location>
        <position position="282"/>
    </location>
    <ligand>
        <name>3-phosphoshikimate</name>
        <dbReference type="ChEBI" id="CHEBI:145989"/>
    </ligand>
</feature>
<feature type="binding site" evidence="1">
    <location>
        <position position="407"/>
    </location>
    <ligand>
        <name>3-phosphoshikimate</name>
        <dbReference type="ChEBI" id="CHEBI:145989"/>
    </ligand>
</feature>
<feature type="binding site" evidence="1">
    <location>
        <position position="434"/>
    </location>
    <ligand>
        <name>3-phosphoshikimate</name>
        <dbReference type="ChEBI" id="CHEBI:145989"/>
    </ligand>
</feature>
<feature type="binding site" evidence="3">
    <location>
        <position position="438"/>
    </location>
    <ligand>
        <name>phosphoenolpyruvate</name>
        <dbReference type="ChEBI" id="CHEBI:58702"/>
    </ligand>
</feature>
<feature type="binding site" evidence="3">
    <location>
        <position position="480"/>
    </location>
    <ligand>
        <name>phosphoenolpyruvate</name>
        <dbReference type="ChEBI" id="CHEBI:58702"/>
    </ligand>
</feature>
<feature type="binding site" evidence="3">
    <location>
        <position position="505"/>
    </location>
    <ligand>
        <name>phosphoenolpyruvate</name>
        <dbReference type="ChEBI" id="CHEBI:58702"/>
    </ligand>
</feature>
<feature type="sequence conflict" description="In Ref. 1; CAA29828." evidence="7" ref="1">
    <original>S</original>
    <variation>C</variation>
    <location>
        <position position="333"/>
    </location>
</feature>
<feature type="sequence conflict" description="In Ref. 1; CAA29828." evidence="7" ref="1">
    <original>P</original>
    <variation>S</variation>
    <location>
        <position position="500"/>
    </location>
</feature>
<feature type="strand" evidence="8">
    <location>
        <begin position="80"/>
        <end position="83"/>
    </location>
</feature>
<feature type="strand" evidence="8">
    <location>
        <begin position="91"/>
        <end position="94"/>
    </location>
</feature>
<feature type="helix" evidence="8">
    <location>
        <begin position="99"/>
        <end position="111"/>
    </location>
</feature>
<feature type="strand" evidence="8">
    <location>
        <begin position="112"/>
        <end position="120"/>
    </location>
</feature>
<feature type="helix" evidence="8">
    <location>
        <begin position="125"/>
        <end position="136"/>
    </location>
</feature>
<feature type="strand" evidence="8">
    <location>
        <begin position="141"/>
        <end position="144"/>
    </location>
</feature>
<feature type="helix" evidence="8">
    <location>
        <begin position="145"/>
        <end position="147"/>
    </location>
</feature>
<feature type="strand" evidence="8">
    <location>
        <begin position="149"/>
        <end position="153"/>
    </location>
</feature>
<feature type="helix" evidence="8">
    <location>
        <begin position="160"/>
        <end position="162"/>
    </location>
</feature>
<feature type="strand" evidence="8">
    <location>
        <begin position="169"/>
        <end position="172"/>
    </location>
</feature>
<feature type="helix" evidence="8">
    <location>
        <begin position="177"/>
        <end position="190"/>
    </location>
</feature>
<feature type="strand" evidence="8">
    <location>
        <begin position="195"/>
        <end position="199"/>
    </location>
</feature>
<feature type="helix" evidence="8">
    <location>
        <begin position="204"/>
        <end position="206"/>
    </location>
</feature>
<feature type="helix" evidence="8">
    <location>
        <begin position="210"/>
        <end position="218"/>
    </location>
</feature>
<feature type="strand" evidence="8">
    <location>
        <begin position="222"/>
        <end position="225"/>
    </location>
</feature>
<feature type="strand" evidence="8">
    <location>
        <begin position="228"/>
        <end position="232"/>
    </location>
</feature>
<feature type="strand" evidence="8">
    <location>
        <begin position="234"/>
        <end position="237"/>
    </location>
</feature>
<feature type="strand" evidence="8">
    <location>
        <begin position="245"/>
        <end position="249"/>
    </location>
</feature>
<feature type="strand" evidence="8">
    <location>
        <begin position="251"/>
        <end position="253"/>
    </location>
</feature>
<feature type="helix" evidence="8">
    <location>
        <begin position="255"/>
        <end position="264"/>
    </location>
</feature>
<feature type="helix" evidence="8">
    <location>
        <begin position="265"/>
        <end position="267"/>
    </location>
</feature>
<feature type="strand" evidence="8">
    <location>
        <begin position="268"/>
        <end position="270"/>
    </location>
</feature>
<feature type="strand" evidence="8">
    <location>
        <begin position="272"/>
        <end position="278"/>
    </location>
</feature>
<feature type="helix" evidence="8">
    <location>
        <begin position="283"/>
        <end position="295"/>
    </location>
</feature>
<feature type="strand" evidence="8">
    <location>
        <begin position="308"/>
        <end position="311"/>
    </location>
</feature>
<feature type="strand" evidence="8">
    <location>
        <begin position="321"/>
        <end position="324"/>
    </location>
</feature>
<feature type="helix" evidence="8">
    <location>
        <begin position="329"/>
        <end position="342"/>
    </location>
</feature>
<feature type="strand" evidence="8">
    <location>
        <begin position="345"/>
        <end position="350"/>
    </location>
</feature>
<feature type="helix" evidence="8">
    <location>
        <begin position="358"/>
        <end position="361"/>
    </location>
</feature>
<feature type="helix" evidence="8">
    <location>
        <begin position="362"/>
        <end position="368"/>
    </location>
</feature>
<feature type="strand" evidence="8">
    <location>
        <begin position="372"/>
        <end position="376"/>
    </location>
</feature>
<feature type="strand" evidence="8">
    <location>
        <begin position="379"/>
        <end position="383"/>
    </location>
</feature>
<feature type="strand" evidence="8">
    <location>
        <begin position="399"/>
        <end position="401"/>
    </location>
</feature>
<feature type="helix" evidence="8">
    <location>
        <begin position="406"/>
        <end position="408"/>
    </location>
</feature>
<feature type="helix" evidence="8">
    <location>
        <begin position="409"/>
        <end position="415"/>
    </location>
</feature>
<feature type="helix" evidence="8">
    <location>
        <begin position="416"/>
        <end position="418"/>
    </location>
</feature>
<feature type="strand" evidence="8">
    <location>
        <begin position="419"/>
        <end position="421"/>
    </location>
</feature>
<feature type="strand" evidence="8">
    <location>
        <begin position="423"/>
        <end position="426"/>
    </location>
</feature>
<feature type="helix" evidence="8">
    <location>
        <begin position="437"/>
        <end position="448"/>
    </location>
</feature>
<feature type="strand" evidence="8">
    <location>
        <begin position="452"/>
        <end position="455"/>
    </location>
</feature>
<feature type="strand" evidence="8">
    <location>
        <begin position="457"/>
        <end position="463"/>
    </location>
</feature>
<feature type="strand" evidence="8">
    <location>
        <begin position="471"/>
        <end position="473"/>
    </location>
</feature>
<feature type="helix" evidence="8">
    <location>
        <begin position="479"/>
        <end position="485"/>
    </location>
</feature>
<feature type="helix" evidence="8">
    <location>
        <begin position="486"/>
        <end position="490"/>
    </location>
</feature>
<feature type="strand" evidence="8">
    <location>
        <begin position="491"/>
        <end position="493"/>
    </location>
</feature>
<feature type="strand" evidence="8">
    <location>
        <begin position="495"/>
        <end position="498"/>
    </location>
</feature>
<feature type="helix" evidence="8">
    <location>
        <begin position="500"/>
        <end position="503"/>
    </location>
</feature>
<feature type="turn" evidence="8">
    <location>
        <begin position="504"/>
        <end position="506"/>
    </location>
</feature>
<feature type="helix" evidence="8">
    <location>
        <begin position="510"/>
        <end position="516"/>
    </location>
</feature>
<proteinExistence type="evidence at protein level"/>
<protein>
    <recommendedName>
        <fullName>3-phosphoshikimate 1-carboxyvinyltransferase, chloroplastic</fullName>
        <ecNumber evidence="2">2.5.1.19</ecNumber>
    </recommendedName>
    <alternativeName>
        <fullName evidence="6">5-enolpyruvylshikimate-3-phosphate synthase</fullName>
        <shortName evidence="6">EPSP synthase</shortName>
        <shortName evidence="6">EPSPs</shortName>
    </alternativeName>
</protein>
<dbReference type="EC" id="2.5.1.19" evidence="2"/>
<dbReference type="EMBL" id="X06613">
    <property type="protein sequence ID" value="CAA29828.1"/>
    <property type="molecule type" value="Genomic_DNA"/>
</dbReference>
<dbReference type="EMBL" id="AC002387">
    <property type="protein sequence ID" value="AAB82633.1"/>
    <property type="molecule type" value="Genomic_DNA"/>
</dbReference>
<dbReference type="EMBL" id="CP002685">
    <property type="protein sequence ID" value="AEC10536.1"/>
    <property type="molecule type" value="Genomic_DNA"/>
</dbReference>
<dbReference type="EMBL" id="CP002685">
    <property type="protein sequence ID" value="ANM62712.1"/>
    <property type="molecule type" value="Genomic_DNA"/>
</dbReference>
<dbReference type="EMBL" id="CP002685">
    <property type="protein sequence ID" value="ANM62713.1"/>
    <property type="molecule type" value="Genomic_DNA"/>
</dbReference>
<dbReference type="EMBL" id="BT022026">
    <property type="protein sequence ID" value="AAY25438.1"/>
    <property type="molecule type" value="mRNA"/>
</dbReference>
<dbReference type="EMBL" id="AK227120">
    <property type="protein sequence ID" value="BAE99170.1"/>
    <property type="molecule type" value="mRNA"/>
</dbReference>
<dbReference type="PIR" id="H84888">
    <property type="entry name" value="H84888"/>
</dbReference>
<dbReference type="PIR" id="S01061">
    <property type="entry name" value="XUMUVS"/>
</dbReference>
<dbReference type="RefSeq" id="NP_001318428.1">
    <property type="nucleotide sequence ID" value="NM_001337122.1"/>
</dbReference>
<dbReference type="RefSeq" id="NP_001324852.1">
    <property type="nucleotide sequence ID" value="NM_001337123.1"/>
</dbReference>
<dbReference type="RefSeq" id="NP_182055.1">
    <property type="nucleotide sequence ID" value="NM_130093.3"/>
</dbReference>
<dbReference type="PDB" id="7PXY">
    <property type="method" value="X-ray"/>
    <property type="resolution" value="1.40 A"/>
    <property type="chains" value="A=77-520"/>
</dbReference>
<dbReference type="PDBsum" id="7PXY"/>
<dbReference type="SMR" id="P05466"/>
<dbReference type="BioGRID" id="4474">
    <property type="interactions" value="3"/>
</dbReference>
<dbReference type="FunCoup" id="P05466">
    <property type="interactions" value="559"/>
</dbReference>
<dbReference type="IntAct" id="P05466">
    <property type="interactions" value="1"/>
</dbReference>
<dbReference type="STRING" id="3702.P05466"/>
<dbReference type="GlyGen" id="P05466">
    <property type="glycosylation" value="1 site"/>
</dbReference>
<dbReference type="iPTMnet" id="P05466"/>
<dbReference type="PaxDb" id="3702-AT2G45300.1"/>
<dbReference type="ProteomicsDB" id="246988"/>
<dbReference type="EnsemblPlants" id="AT2G45300.1">
    <property type="protein sequence ID" value="AT2G45300.1"/>
    <property type="gene ID" value="AT2G45300"/>
</dbReference>
<dbReference type="EnsemblPlants" id="AT2G45300.2">
    <property type="protein sequence ID" value="AT2G45300.2"/>
    <property type="gene ID" value="AT2G45300"/>
</dbReference>
<dbReference type="EnsemblPlants" id="AT2G45300.4">
    <property type="protein sequence ID" value="AT2G45300.4"/>
    <property type="gene ID" value="AT2G45300"/>
</dbReference>
<dbReference type="GeneID" id="819138"/>
<dbReference type="Gramene" id="AT2G45300.1">
    <property type="protein sequence ID" value="AT2G45300.1"/>
    <property type="gene ID" value="AT2G45300"/>
</dbReference>
<dbReference type="Gramene" id="AT2G45300.2">
    <property type="protein sequence ID" value="AT2G45300.2"/>
    <property type="gene ID" value="AT2G45300"/>
</dbReference>
<dbReference type="Gramene" id="AT2G45300.4">
    <property type="protein sequence ID" value="AT2G45300.4"/>
    <property type="gene ID" value="AT2G45300"/>
</dbReference>
<dbReference type="KEGG" id="ath:AT2G45300"/>
<dbReference type="Araport" id="AT2G45300"/>
<dbReference type="TAIR" id="AT2G45300"/>
<dbReference type="eggNOG" id="KOG0692">
    <property type="taxonomic scope" value="Eukaryota"/>
</dbReference>
<dbReference type="HOGENOM" id="CLU_024321_0_0_1"/>
<dbReference type="InParanoid" id="P05466"/>
<dbReference type="OMA" id="CVSKTCP"/>
<dbReference type="OrthoDB" id="197068at2759"/>
<dbReference type="PhylomeDB" id="P05466"/>
<dbReference type="BioCyc" id="ARA:AT2G45300-MONOMER"/>
<dbReference type="UniPathway" id="UPA00053">
    <property type="reaction ID" value="UER00089"/>
</dbReference>
<dbReference type="CD-CODE" id="4299E36E">
    <property type="entry name" value="Nucleolus"/>
</dbReference>
<dbReference type="PRO" id="PR:P05466"/>
<dbReference type="Proteomes" id="UP000006548">
    <property type="component" value="Chromosome 2"/>
</dbReference>
<dbReference type="ExpressionAtlas" id="P05466">
    <property type="expression patterns" value="baseline and differential"/>
</dbReference>
<dbReference type="GO" id="GO:0009507">
    <property type="term" value="C:chloroplast"/>
    <property type="evidence" value="ECO:0007005"/>
    <property type="project" value="TAIR"/>
</dbReference>
<dbReference type="GO" id="GO:0009570">
    <property type="term" value="C:chloroplast stroma"/>
    <property type="evidence" value="ECO:0007005"/>
    <property type="project" value="TAIR"/>
</dbReference>
<dbReference type="GO" id="GO:0003866">
    <property type="term" value="F:3-phosphoshikimate 1-carboxyvinyltransferase activity"/>
    <property type="evidence" value="ECO:0000315"/>
    <property type="project" value="TAIR"/>
</dbReference>
<dbReference type="GO" id="GO:0008652">
    <property type="term" value="P:amino acid biosynthetic process"/>
    <property type="evidence" value="ECO:0007669"/>
    <property type="project" value="UniProtKB-KW"/>
</dbReference>
<dbReference type="GO" id="GO:0009073">
    <property type="term" value="P:aromatic amino acid family biosynthetic process"/>
    <property type="evidence" value="ECO:0007669"/>
    <property type="project" value="UniProtKB-KW"/>
</dbReference>
<dbReference type="GO" id="GO:0009423">
    <property type="term" value="P:chorismate biosynthetic process"/>
    <property type="evidence" value="ECO:0000315"/>
    <property type="project" value="TAIR"/>
</dbReference>
<dbReference type="CDD" id="cd01556">
    <property type="entry name" value="EPSP_synthase"/>
    <property type="match status" value="1"/>
</dbReference>
<dbReference type="FunFam" id="3.65.10.10:FF:000004">
    <property type="entry name" value="3-phosphoshikimate 1-carboxyvinyltransferase"/>
    <property type="match status" value="1"/>
</dbReference>
<dbReference type="FunFam" id="3.65.10.10:FF:000009">
    <property type="entry name" value="3-phosphoshikimate 1-carboxyvinyltransferase"/>
    <property type="match status" value="1"/>
</dbReference>
<dbReference type="Gene3D" id="3.65.10.10">
    <property type="entry name" value="Enolpyruvate transferase domain"/>
    <property type="match status" value="2"/>
</dbReference>
<dbReference type="HAMAP" id="MF_00210">
    <property type="entry name" value="EPSP_synth"/>
    <property type="match status" value="1"/>
</dbReference>
<dbReference type="InterPro" id="IPR001986">
    <property type="entry name" value="Enolpyruvate_Tfrase_dom"/>
</dbReference>
<dbReference type="InterPro" id="IPR036968">
    <property type="entry name" value="Enolpyruvate_Tfrase_sf"/>
</dbReference>
<dbReference type="InterPro" id="IPR006264">
    <property type="entry name" value="EPSP_synthase"/>
</dbReference>
<dbReference type="InterPro" id="IPR023193">
    <property type="entry name" value="EPSP_synthase_CS"/>
</dbReference>
<dbReference type="InterPro" id="IPR013792">
    <property type="entry name" value="RNA3'P_cycl/enolpyr_Trfase_a/b"/>
</dbReference>
<dbReference type="NCBIfam" id="TIGR01356">
    <property type="entry name" value="aroA"/>
    <property type="match status" value="1"/>
</dbReference>
<dbReference type="PANTHER" id="PTHR21090">
    <property type="entry name" value="AROM/DEHYDROQUINATE SYNTHASE"/>
    <property type="match status" value="1"/>
</dbReference>
<dbReference type="PANTHER" id="PTHR21090:SF5">
    <property type="entry name" value="PENTAFUNCTIONAL AROM POLYPEPTIDE"/>
    <property type="match status" value="1"/>
</dbReference>
<dbReference type="Pfam" id="PF00275">
    <property type="entry name" value="EPSP_synthase"/>
    <property type="match status" value="1"/>
</dbReference>
<dbReference type="SUPFAM" id="SSF55205">
    <property type="entry name" value="EPT/RTPC-like"/>
    <property type="match status" value="1"/>
</dbReference>
<dbReference type="PROSITE" id="PS00104">
    <property type="entry name" value="EPSP_SYNTHASE_1"/>
    <property type="match status" value="1"/>
</dbReference>
<dbReference type="PROSITE" id="PS00885">
    <property type="entry name" value="EPSP_SYNTHASE_2"/>
    <property type="match status" value="1"/>
</dbReference>
<sequence length="520" mass="55734">MAQVSRICNGVQNPSLISNLSKSSQRKSPLSVSLKTQQHPRAYPISSSWGLKKSGMTLIGSELRPLKVMSSVSTAEKASEIVLQPIREISGLIKLPGSKSLSNRILLLAALSEGTTVVDNLLNSDDINYMLDALKRLGLNVETDSENNRAVVEGCGGIFPASIDSKSDIELYLGNAGTAMRPLTAAVTAAGGNASYVLDGVPRMRERPIGDLVVGLKQLGADVECTLGTNCPPVRVNANGGLPGGKVKLSGSISSQYLTALLMSAPLALGDVEIEIVDKLISVPYVEMTLKLMERFGVSVEHSDSWDRFFVKGGQKYKSPGNAYVEGDASSASYFLAGAAITGETVTVEGCGTTSLQGDVKFAEVLEKMGCKVSWTENSVTVTGPPRDAFGMRHLRAIDVNMNKMPDVAMTLAVVALFADGPTTIRDVASWRVKETERMIAICTELRKLGATVEEGSDYCVITPPKKVKTAEIDTYDDHRMAMAFSLAACADVPITINDPGCTRKTFPDYFQVLERITKH</sequence>
<evidence type="ECO:0000250" key="1">
    <source>
        <dbReference type="UniProtKB" id="P0A6D3"/>
    </source>
</evidence>
<evidence type="ECO:0000250" key="2">
    <source>
        <dbReference type="UniProtKB" id="P11043"/>
    </source>
</evidence>
<evidence type="ECO:0000250" key="3">
    <source>
        <dbReference type="UniProtKB" id="P9WPY5"/>
    </source>
</evidence>
<evidence type="ECO:0000255" key="4"/>
<evidence type="ECO:0000256" key="5">
    <source>
        <dbReference type="SAM" id="MobiDB-lite"/>
    </source>
</evidence>
<evidence type="ECO:0000303" key="6">
    <source>
    </source>
</evidence>
<evidence type="ECO:0000305" key="7"/>
<evidence type="ECO:0007829" key="8">
    <source>
        <dbReference type="PDB" id="7PXY"/>
    </source>
</evidence>
<comment type="function">
    <text evidence="2">Catalyzes the transfer of the enolpyruvyl moiety of phosphoenolpyruvate (PEP) to the 5-hydroxyl of shikimate-3-phosphate (S3P) to produce enolpyruvyl shikimate-3-phosphate and inorganic phosphate.</text>
</comment>
<comment type="catalytic activity">
    <reaction evidence="2">
        <text>3-phosphoshikimate + phosphoenolpyruvate = 5-O-(1-carboxyvinyl)-3-phosphoshikimate + phosphate</text>
        <dbReference type="Rhea" id="RHEA:21256"/>
        <dbReference type="ChEBI" id="CHEBI:43474"/>
        <dbReference type="ChEBI" id="CHEBI:57701"/>
        <dbReference type="ChEBI" id="CHEBI:58702"/>
        <dbReference type="ChEBI" id="CHEBI:145989"/>
        <dbReference type="EC" id="2.5.1.19"/>
    </reaction>
    <physiologicalReaction direction="left-to-right" evidence="2">
        <dbReference type="Rhea" id="RHEA:21257"/>
    </physiologicalReaction>
</comment>
<comment type="pathway">
    <text evidence="2">Metabolic intermediate biosynthesis; chorismate biosynthesis; chorismate from D-erythrose 4-phosphate and phosphoenolpyruvate: step 6/7.</text>
</comment>
<comment type="subcellular location">
    <subcellularLocation>
        <location evidence="4">Plastid</location>
        <location evidence="4">Chloroplast</location>
    </subcellularLocation>
</comment>
<comment type="miscellaneous">
    <text>This enzyme is the target of the potent, broad-spectrum herbicide, glyphosate [n-(phosphonomethyl)glycine]. Overproduction of EPSP leads to glyphosate tolerance.</text>
</comment>
<comment type="similarity">
    <text evidence="7">Belongs to the EPSP synthase family.</text>
</comment>
<accession>P05466</accession>
<accession>O22142</accession>
<accession>Q501E1</accession>
<keyword id="KW-0002">3D-structure</keyword>
<keyword id="KW-0028">Amino-acid biosynthesis</keyword>
<keyword id="KW-0057">Aromatic amino acid biosynthesis</keyword>
<keyword id="KW-0150">Chloroplast</keyword>
<keyword id="KW-0934">Plastid</keyword>
<keyword id="KW-1185">Reference proteome</keyword>
<keyword id="KW-0808">Transferase</keyword>
<keyword id="KW-0809">Transit peptide</keyword>
<organism>
    <name type="scientific">Arabidopsis thaliana</name>
    <name type="common">Mouse-ear cress</name>
    <dbReference type="NCBI Taxonomy" id="3702"/>
    <lineage>
        <taxon>Eukaryota</taxon>
        <taxon>Viridiplantae</taxon>
        <taxon>Streptophyta</taxon>
        <taxon>Embryophyta</taxon>
        <taxon>Tracheophyta</taxon>
        <taxon>Spermatophyta</taxon>
        <taxon>Magnoliopsida</taxon>
        <taxon>eudicotyledons</taxon>
        <taxon>Gunneridae</taxon>
        <taxon>Pentapetalae</taxon>
        <taxon>rosids</taxon>
        <taxon>malvids</taxon>
        <taxon>Brassicales</taxon>
        <taxon>Brassicaceae</taxon>
        <taxon>Camelineae</taxon>
        <taxon>Arabidopsis</taxon>
    </lineage>
</organism>
<name>AROA_ARATH</name>
<reference key="1">
    <citation type="journal article" date="1987" name="Mol. Gen. Genet.">
        <title>Cloning of an Arabidopsis thaliana gene encoding 5-enolpyruvylshikimate-3-phosphate synthase: sequence analysis and manipulation to obtain glyphosate-tolerant plants.</title>
        <authorList>
            <person name="Klee H.J."/>
            <person name="Muskopf Y.M."/>
            <person name="Gasser C.S."/>
        </authorList>
    </citation>
    <scope>NUCLEOTIDE SEQUENCE [GENOMIC DNA]</scope>
    <source>
        <strain>cv. Columbia</strain>
    </source>
</reference>
<reference key="2">
    <citation type="submission" date="1988-10" db="EMBL/GenBank/DDBJ databases">
        <authorList>
            <person name="Gasser C.S."/>
        </authorList>
    </citation>
    <scope>SEQUENCE REVISION</scope>
</reference>
<reference key="3">
    <citation type="journal article" date="1999" name="Nature">
        <title>Sequence and analysis of chromosome 2 of the plant Arabidopsis thaliana.</title>
        <authorList>
            <person name="Lin X."/>
            <person name="Kaul S."/>
            <person name="Rounsley S.D."/>
            <person name="Shea T.P."/>
            <person name="Benito M.-I."/>
            <person name="Town C.D."/>
            <person name="Fujii C.Y."/>
            <person name="Mason T.M."/>
            <person name="Bowman C.L."/>
            <person name="Barnstead M.E."/>
            <person name="Feldblyum T.V."/>
            <person name="Buell C.R."/>
            <person name="Ketchum K.A."/>
            <person name="Lee J.J."/>
            <person name="Ronning C.M."/>
            <person name="Koo H.L."/>
            <person name="Moffat K.S."/>
            <person name="Cronin L.A."/>
            <person name="Shen M."/>
            <person name="Pai G."/>
            <person name="Van Aken S."/>
            <person name="Umayam L."/>
            <person name="Tallon L.J."/>
            <person name="Gill J.E."/>
            <person name="Adams M.D."/>
            <person name="Carrera A.J."/>
            <person name="Creasy T.H."/>
            <person name="Goodman H.M."/>
            <person name="Somerville C.R."/>
            <person name="Copenhaver G.P."/>
            <person name="Preuss D."/>
            <person name="Nierman W.C."/>
            <person name="White O."/>
            <person name="Eisen J.A."/>
            <person name="Salzberg S.L."/>
            <person name="Fraser C.M."/>
            <person name="Venter J.C."/>
        </authorList>
    </citation>
    <scope>NUCLEOTIDE SEQUENCE [LARGE SCALE GENOMIC DNA]</scope>
    <source>
        <strain>cv. Columbia</strain>
    </source>
</reference>
<reference key="4">
    <citation type="journal article" date="2017" name="Plant J.">
        <title>Araport11: a complete reannotation of the Arabidopsis thaliana reference genome.</title>
        <authorList>
            <person name="Cheng C.Y."/>
            <person name="Krishnakumar V."/>
            <person name="Chan A.P."/>
            <person name="Thibaud-Nissen F."/>
            <person name="Schobel S."/>
            <person name="Town C.D."/>
        </authorList>
    </citation>
    <scope>GENOME REANNOTATION</scope>
    <source>
        <strain>cv. Columbia</strain>
    </source>
</reference>
<reference key="5">
    <citation type="submission" date="2005-05" db="EMBL/GenBank/DDBJ databases">
        <title>Arabidopsis ORF clones.</title>
        <authorList>
            <person name="Cheuk R.F."/>
            <person name="Chen H."/>
            <person name="Kim C.J."/>
            <person name="Shinn P."/>
            <person name="Ecker J.R."/>
        </authorList>
    </citation>
    <scope>NUCLEOTIDE SEQUENCE [LARGE SCALE MRNA]</scope>
    <source>
        <strain>cv. Columbia</strain>
    </source>
</reference>
<reference key="6">
    <citation type="submission" date="2006-07" db="EMBL/GenBank/DDBJ databases">
        <title>Large-scale analysis of RIKEN Arabidopsis full-length (RAFL) cDNAs.</title>
        <authorList>
            <person name="Totoki Y."/>
            <person name="Seki M."/>
            <person name="Ishida J."/>
            <person name="Nakajima M."/>
            <person name="Enju A."/>
            <person name="Kamiya A."/>
            <person name="Narusaka M."/>
            <person name="Shin-i T."/>
            <person name="Nakagawa M."/>
            <person name="Sakamoto N."/>
            <person name="Oishi K."/>
            <person name="Kohara Y."/>
            <person name="Kobayashi M."/>
            <person name="Toyoda A."/>
            <person name="Sakaki Y."/>
            <person name="Sakurai T."/>
            <person name="Iida K."/>
            <person name="Akiyama K."/>
            <person name="Satou M."/>
            <person name="Toyoda T."/>
            <person name="Konagaya A."/>
            <person name="Carninci P."/>
            <person name="Kawai J."/>
            <person name="Hayashizaki Y."/>
            <person name="Shinozaki K."/>
        </authorList>
    </citation>
    <scope>NUCLEOTIDE SEQUENCE [LARGE SCALE MRNA]</scope>
    <source>
        <strain>cv. Columbia</strain>
    </source>
</reference>
<gene>
    <name type="ordered locus">At2g45300</name>
    <name type="ORF">F4L23.19</name>
</gene>